<protein>
    <recommendedName>
        <fullName>Uncharacterized 5.8 kDa protein</fullName>
    </recommendedName>
</protein>
<feature type="chain" id="PRO_0000222647" description="Uncharacterized 5.8 kDa protein">
    <location>
        <begin position="1"/>
        <end position="43"/>
    </location>
</feature>
<feature type="region of interest" description="Disordered" evidence="1">
    <location>
        <begin position="13"/>
        <end position="43"/>
    </location>
</feature>
<accession>P16485</accession>
<evidence type="ECO:0000256" key="1">
    <source>
        <dbReference type="SAM" id="MobiDB-lite"/>
    </source>
</evidence>
<organism>
    <name type="scientific">Clover yellow mosaic virus</name>
    <name type="common">CYMV</name>
    <dbReference type="NCBI Taxonomy" id="12177"/>
    <lineage>
        <taxon>Viruses</taxon>
        <taxon>Riboviria</taxon>
        <taxon>Orthornavirae</taxon>
        <taxon>Kitrinoviricota</taxon>
        <taxon>Alsuviricetes</taxon>
        <taxon>Tymovirales</taxon>
        <taxon>Alphaflexiviridae</taxon>
        <taxon>Potexvirus</taxon>
    </lineage>
</organism>
<dbReference type="EMBL" id="D00485">
    <property type="protein sequence ID" value="BAA00374.1"/>
    <property type="molecule type" value="Genomic_RNA"/>
</dbReference>
<dbReference type="PIR" id="JU0404">
    <property type="entry name" value="JU0404"/>
</dbReference>
<proteinExistence type="predicted"/>
<organismHost>
    <name type="scientific">Chenopodium album</name>
    <name type="common">Fat hen</name>
    <dbReference type="NCBI Taxonomy" id="3559"/>
</organismHost>
<organismHost>
    <name type="scientific">Malus pumila</name>
    <name type="common">Paradise apple</name>
    <dbReference type="NCBI Taxonomy" id="283210"/>
</organismHost>
<organismHost>
    <name type="scientific">Medicago sativa</name>
    <name type="common">Alfalfa</name>
    <dbReference type="NCBI Taxonomy" id="3879"/>
</organismHost>
<organismHost>
    <name type="scientific">Pisum sativum</name>
    <name type="common">Garden pea</name>
    <name type="synonym">Lathyrus oleraceus</name>
    <dbReference type="NCBI Taxonomy" id="3888"/>
</organismHost>
<organismHost>
    <name type="scientific">Stellaria media</name>
    <name type="common">Common chickweed</name>
    <name type="synonym">Alsine media</name>
    <dbReference type="NCBI Taxonomy" id="13274"/>
</organismHost>
<organismHost>
    <name type="scientific">Trifolium</name>
    <dbReference type="NCBI Taxonomy" id="3898"/>
</organismHost>
<organismHost>
    <name type="scientific">Vicia sativa</name>
    <name type="common">Spring vetch</name>
    <name type="synonym">Tare</name>
    <dbReference type="NCBI Taxonomy" id="3908"/>
</organismHost>
<name>Y5K_CYMV</name>
<reference key="1">
    <citation type="journal article" date="1989" name="J. Gen. Virol.">
        <title>Nucleotide sequence of the 3'-terminal region of clover yellow mosaic virus RNA.</title>
        <authorList>
            <person name="Abouhaidar M.G."/>
            <person name="Lai R."/>
        </authorList>
    </citation>
    <scope>NUCLEOTIDE SEQUENCE [GENOMIC RNA]</scope>
</reference>
<sequence length="43" mass="5189">MLHPHQWTLSLHQLPRLSRPRQSHLPAQTPQPRLSYPKTRRQI</sequence>